<protein>
    <recommendedName>
        <fullName evidence="1">DNA-directed RNA polymerase subunit beta</fullName>
        <shortName evidence="1">RNAP subunit beta</shortName>
        <ecNumber evidence="1">2.7.7.6</ecNumber>
    </recommendedName>
    <alternativeName>
        <fullName evidence="1">RNA polymerase subunit beta</fullName>
    </alternativeName>
    <alternativeName>
        <fullName evidence="1">Transcriptase subunit beta</fullName>
    </alternativeName>
</protein>
<sequence>MVHPVQVGKRTRMSFSRLKEVGQMPNLIEVQLDSYDWFLKEGLQEVFDDINPIQDYTGNLNLEFVGYKLDLDSIKYSVEECKERDSTYAAPLKVKVRLLNKETGEIKEQEVFMGDFPLMTEQGTFIINGAERVIVSQLVRSPGVYYDMTVDKTGSKLFSATVIPNRGAWLEYETDSNNIIYVRIDKTRKLPITILARALGYGTDAEIIEFFGEDERLKATIEKDNTKTREEALLEIYKRLRPGEPPTVDSAESLIESLFFDAKRYDLSRVGRYKFNKKLAIHLRITNQIADQDIVNPQTGEILVQKGEKIDKDKAIEIQNCGINEVYIKIDDKSFKVIGNHFVDIHSLVPFDISDLNIKEYVFYPVLKEILDNYADEESIKEEIRKNIYRLIPKHIIREDIYATINYELALSYDIGYKDDIDHLGNRRLRSVGELLQNQFRIGLSRMERVVKERMTIQDQEVITPQALINIRPVAASIKEFFGSSQLSQFMDQTNPLSELTHKRRLSALGPGGLSRERAGFEVRDVHHSHYGRMCPIETPEGPNIGLINSLATFAKVNEYGFIETPYRRIDPKNKRATNDIVYMTADEEDLYVIARSDEPIDENGYFIDDKVTVRAKEEVLVVPVSEVEYMDISPRQLVSVATAMIPFLENDDASRALMGSNMQRQAVPLLKPQAPIVGTGIEYKAATDSGVLPKAKNAGTVVYVSADEIRVRRDSDGGIDKYKLLKFKRSNQGTCINQRPIVSKGEVVAKETLLADGPSTDLGEIALGKNILMGFITWEGYNYEDAMLISEQLVKEDVFTSIHIEEYEAEARDTKLGPEEITRDIPNVGEEALKDIDERGIIRIGAEVRSGDILVGKVTPKGETELTAEERLLRAIFGEKAREVRDTSLRVPHGEAGIIVDVKIFTRENGDELPPGVNKLVRCYIAQKRKISVGDKMAGRHGNKGVISRVLPEEDMPFLPDGRPLQICLNPLGVPSRMNIGQVLEVHLGLAASKLGWHIATPVFDGAIESDIVDCLRKAGYSEDGKTVLYDGRTGEPFDNRVTVGYMYILKLAHLVDDKIHARSTGPYSLVTQQPLGGKAQFGGQRFGEMEVWALEAYGAAHTLQEILTVKSDDVVGRVKTYEAIVKGENIPEPGVPESFKVLIKELQALCLDVKVLNDDNQEIKLKESVDEDADELEVNIEGTENQPEEKEEKEKEDSDEYDDLREEDVEPDLEELSLDDLDLDDFGDEH</sequence>
<proteinExistence type="inferred from homology"/>
<dbReference type="EC" id="2.7.7.6" evidence="1"/>
<dbReference type="EMBL" id="CP000726">
    <property type="protein sequence ID" value="ABS35322.1"/>
    <property type="molecule type" value="Genomic_DNA"/>
</dbReference>
<dbReference type="RefSeq" id="WP_012048357.1">
    <property type="nucleotide sequence ID" value="NC_009697.1"/>
</dbReference>
<dbReference type="SMR" id="A7FZ77"/>
<dbReference type="GeneID" id="5187754"/>
<dbReference type="KEGG" id="cba:CLB_3545"/>
<dbReference type="HOGENOM" id="CLU_000524_4_1_9"/>
<dbReference type="GO" id="GO:0000428">
    <property type="term" value="C:DNA-directed RNA polymerase complex"/>
    <property type="evidence" value="ECO:0007669"/>
    <property type="project" value="UniProtKB-KW"/>
</dbReference>
<dbReference type="GO" id="GO:0003677">
    <property type="term" value="F:DNA binding"/>
    <property type="evidence" value="ECO:0007669"/>
    <property type="project" value="UniProtKB-UniRule"/>
</dbReference>
<dbReference type="GO" id="GO:0003899">
    <property type="term" value="F:DNA-directed RNA polymerase activity"/>
    <property type="evidence" value="ECO:0007669"/>
    <property type="project" value="UniProtKB-UniRule"/>
</dbReference>
<dbReference type="GO" id="GO:0032549">
    <property type="term" value="F:ribonucleoside binding"/>
    <property type="evidence" value="ECO:0007669"/>
    <property type="project" value="InterPro"/>
</dbReference>
<dbReference type="GO" id="GO:0006351">
    <property type="term" value="P:DNA-templated transcription"/>
    <property type="evidence" value="ECO:0007669"/>
    <property type="project" value="UniProtKB-UniRule"/>
</dbReference>
<dbReference type="CDD" id="cd00653">
    <property type="entry name" value="RNA_pol_B_RPB2"/>
    <property type="match status" value="1"/>
</dbReference>
<dbReference type="FunFam" id="3.90.1800.10:FF:000001">
    <property type="entry name" value="DNA-directed RNA polymerase subunit beta"/>
    <property type="match status" value="1"/>
</dbReference>
<dbReference type="Gene3D" id="2.40.50.100">
    <property type="match status" value="1"/>
</dbReference>
<dbReference type="Gene3D" id="2.40.50.150">
    <property type="match status" value="1"/>
</dbReference>
<dbReference type="Gene3D" id="3.90.1100.10">
    <property type="match status" value="1"/>
</dbReference>
<dbReference type="Gene3D" id="2.30.150.10">
    <property type="entry name" value="DNA-directed RNA polymerase, beta subunit, external 1 domain"/>
    <property type="match status" value="1"/>
</dbReference>
<dbReference type="Gene3D" id="2.40.270.10">
    <property type="entry name" value="DNA-directed RNA polymerase, subunit 2, domain 6"/>
    <property type="match status" value="1"/>
</dbReference>
<dbReference type="Gene3D" id="3.90.1800.10">
    <property type="entry name" value="RNA polymerase alpha subunit dimerisation domain"/>
    <property type="match status" value="1"/>
</dbReference>
<dbReference type="Gene3D" id="3.90.1110.10">
    <property type="entry name" value="RNA polymerase Rpb2, domain 2"/>
    <property type="match status" value="1"/>
</dbReference>
<dbReference type="HAMAP" id="MF_01321">
    <property type="entry name" value="RNApol_bact_RpoB"/>
    <property type="match status" value="1"/>
</dbReference>
<dbReference type="InterPro" id="IPR042107">
    <property type="entry name" value="DNA-dir_RNA_pol_bsu_ext_1_sf"/>
</dbReference>
<dbReference type="InterPro" id="IPR019462">
    <property type="entry name" value="DNA-dir_RNA_pol_bsu_external_1"/>
</dbReference>
<dbReference type="InterPro" id="IPR015712">
    <property type="entry name" value="DNA-dir_RNA_pol_su2"/>
</dbReference>
<dbReference type="InterPro" id="IPR007120">
    <property type="entry name" value="DNA-dir_RNAP_su2_dom"/>
</dbReference>
<dbReference type="InterPro" id="IPR037033">
    <property type="entry name" value="DNA-dir_RNAP_su2_hyb_sf"/>
</dbReference>
<dbReference type="InterPro" id="IPR010243">
    <property type="entry name" value="RNA_pol_bsu_bac"/>
</dbReference>
<dbReference type="InterPro" id="IPR007121">
    <property type="entry name" value="RNA_pol_bsu_CS"/>
</dbReference>
<dbReference type="InterPro" id="IPR007644">
    <property type="entry name" value="RNA_pol_bsu_protrusion"/>
</dbReference>
<dbReference type="InterPro" id="IPR007642">
    <property type="entry name" value="RNA_pol_Rpb2_2"/>
</dbReference>
<dbReference type="InterPro" id="IPR037034">
    <property type="entry name" value="RNA_pol_Rpb2_2_sf"/>
</dbReference>
<dbReference type="InterPro" id="IPR007645">
    <property type="entry name" value="RNA_pol_Rpb2_3"/>
</dbReference>
<dbReference type="InterPro" id="IPR007641">
    <property type="entry name" value="RNA_pol_Rpb2_7"/>
</dbReference>
<dbReference type="InterPro" id="IPR014724">
    <property type="entry name" value="RNA_pol_RPB2_OB-fold"/>
</dbReference>
<dbReference type="NCBIfam" id="NF001616">
    <property type="entry name" value="PRK00405.1"/>
    <property type="match status" value="1"/>
</dbReference>
<dbReference type="NCBIfam" id="TIGR02013">
    <property type="entry name" value="rpoB"/>
    <property type="match status" value="1"/>
</dbReference>
<dbReference type="PANTHER" id="PTHR20856">
    <property type="entry name" value="DNA-DIRECTED RNA POLYMERASE I SUBUNIT 2"/>
    <property type="match status" value="1"/>
</dbReference>
<dbReference type="Pfam" id="PF04563">
    <property type="entry name" value="RNA_pol_Rpb2_1"/>
    <property type="match status" value="1"/>
</dbReference>
<dbReference type="Pfam" id="PF04561">
    <property type="entry name" value="RNA_pol_Rpb2_2"/>
    <property type="match status" value="2"/>
</dbReference>
<dbReference type="Pfam" id="PF04565">
    <property type="entry name" value="RNA_pol_Rpb2_3"/>
    <property type="match status" value="1"/>
</dbReference>
<dbReference type="Pfam" id="PF10385">
    <property type="entry name" value="RNA_pol_Rpb2_45"/>
    <property type="match status" value="1"/>
</dbReference>
<dbReference type="Pfam" id="PF00562">
    <property type="entry name" value="RNA_pol_Rpb2_6"/>
    <property type="match status" value="1"/>
</dbReference>
<dbReference type="Pfam" id="PF04560">
    <property type="entry name" value="RNA_pol_Rpb2_7"/>
    <property type="match status" value="1"/>
</dbReference>
<dbReference type="SUPFAM" id="SSF64484">
    <property type="entry name" value="beta and beta-prime subunits of DNA dependent RNA-polymerase"/>
    <property type="match status" value="1"/>
</dbReference>
<dbReference type="PROSITE" id="PS01166">
    <property type="entry name" value="RNA_POL_BETA"/>
    <property type="match status" value="1"/>
</dbReference>
<name>RPOB_CLOB1</name>
<reference key="1">
    <citation type="journal article" date="2007" name="PLoS ONE">
        <title>Analysis of the neurotoxin complex genes in Clostridium botulinum A1-A4 and B1 strains: BoNT/A3, /Ba4 and /B1 clusters are located within plasmids.</title>
        <authorList>
            <person name="Smith T.J."/>
            <person name="Hill K.K."/>
            <person name="Foley B.T."/>
            <person name="Detter J.C."/>
            <person name="Munk A.C."/>
            <person name="Bruce D.C."/>
            <person name="Doggett N.A."/>
            <person name="Smith L.A."/>
            <person name="Marks J.D."/>
            <person name="Xie G."/>
            <person name="Brettin T.S."/>
        </authorList>
    </citation>
    <scope>NUCLEOTIDE SEQUENCE [LARGE SCALE GENOMIC DNA]</scope>
    <source>
        <strain>ATCC 19397 / Type A</strain>
    </source>
</reference>
<comment type="function">
    <text evidence="1">DNA-dependent RNA polymerase catalyzes the transcription of DNA into RNA using the four ribonucleoside triphosphates as substrates.</text>
</comment>
<comment type="catalytic activity">
    <reaction evidence="1">
        <text>RNA(n) + a ribonucleoside 5'-triphosphate = RNA(n+1) + diphosphate</text>
        <dbReference type="Rhea" id="RHEA:21248"/>
        <dbReference type="Rhea" id="RHEA-COMP:14527"/>
        <dbReference type="Rhea" id="RHEA-COMP:17342"/>
        <dbReference type="ChEBI" id="CHEBI:33019"/>
        <dbReference type="ChEBI" id="CHEBI:61557"/>
        <dbReference type="ChEBI" id="CHEBI:140395"/>
        <dbReference type="EC" id="2.7.7.6"/>
    </reaction>
</comment>
<comment type="subunit">
    <text evidence="1">The RNAP catalytic core consists of 2 alpha, 1 beta, 1 beta' and 1 omega subunit. When a sigma factor is associated with the core the holoenzyme is formed, which can initiate transcription.</text>
</comment>
<comment type="similarity">
    <text evidence="1">Belongs to the RNA polymerase beta chain family.</text>
</comment>
<evidence type="ECO:0000255" key="1">
    <source>
        <dbReference type="HAMAP-Rule" id="MF_01321"/>
    </source>
</evidence>
<evidence type="ECO:0000256" key="2">
    <source>
        <dbReference type="SAM" id="MobiDB-lite"/>
    </source>
</evidence>
<feature type="chain" id="PRO_1000051968" description="DNA-directed RNA polymerase subunit beta">
    <location>
        <begin position="1"/>
        <end position="1232"/>
    </location>
</feature>
<feature type="region of interest" description="Disordered" evidence="2">
    <location>
        <begin position="1170"/>
        <end position="1232"/>
    </location>
</feature>
<feature type="compositionally biased region" description="Acidic residues" evidence="2">
    <location>
        <begin position="1171"/>
        <end position="1180"/>
    </location>
</feature>
<feature type="compositionally biased region" description="Basic and acidic residues" evidence="2">
    <location>
        <begin position="1189"/>
        <end position="1198"/>
    </location>
</feature>
<feature type="compositionally biased region" description="Acidic residues" evidence="2">
    <location>
        <begin position="1199"/>
        <end position="1232"/>
    </location>
</feature>
<gene>
    <name evidence="1" type="primary">rpoB</name>
    <name type="ordered locus">CLB_3545</name>
</gene>
<organism>
    <name type="scientific">Clostridium botulinum (strain ATCC 19397 / Type A)</name>
    <dbReference type="NCBI Taxonomy" id="441770"/>
    <lineage>
        <taxon>Bacteria</taxon>
        <taxon>Bacillati</taxon>
        <taxon>Bacillota</taxon>
        <taxon>Clostridia</taxon>
        <taxon>Eubacteriales</taxon>
        <taxon>Clostridiaceae</taxon>
        <taxon>Clostridium</taxon>
    </lineage>
</organism>
<accession>A7FZ77</accession>
<keyword id="KW-0240">DNA-directed RNA polymerase</keyword>
<keyword id="KW-0548">Nucleotidyltransferase</keyword>
<keyword id="KW-0804">Transcription</keyword>
<keyword id="KW-0808">Transferase</keyword>